<feature type="chain" id="PRO_0000271798" description="Atypical kinase COQ8B, mitochondrial">
    <location>
        <begin position="1"/>
        <end position="533"/>
    </location>
</feature>
<feature type="transmembrane region" description="Helical" evidence="3">
    <location>
        <begin position="93"/>
        <end position="109"/>
    </location>
</feature>
<feature type="domain" description="Protein kinase">
    <location>
        <begin position="192"/>
        <end position="424"/>
    </location>
</feature>
<feature type="short sequence motif" description="KxGQ motif" evidence="1">
    <location>
        <begin position="156"/>
        <end position="159"/>
    </location>
</feature>
<feature type="short sequence motif" description="AAAS motif" evidence="1">
    <location>
        <begin position="217"/>
        <end position="220"/>
    </location>
</feature>
<feature type="active site" description="Proton acceptor" evidence="1">
    <location>
        <position position="368"/>
    </location>
</feature>
<feature type="binding site" evidence="1">
    <location>
        <position position="220"/>
    </location>
    <ligand>
        <name>ATP</name>
        <dbReference type="ChEBI" id="CHEBI:30616"/>
    </ligand>
</feature>
<feature type="binding site" evidence="1">
    <location>
        <position position="238"/>
    </location>
    <ligand>
        <name>ATP</name>
        <dbReference type="ChEBI" id="CHEBI:30616"/>
    </ligand>
</feature>
<feature type="binding site" evidence="1">
    <location>
        <begin position="325"/>
        <end position="328"/>
    </location>
    <ligand>
        <name>ATP</name>
        <dbReference type="ChEBI" id="CHEBI:30616"/>
    </ligand>
</feature>
<feature type="binding site" evidence="1">
    <location>
        <position position="373"/>
    </location>
    <ligand>
        <name>ATP</name>
        <dbReference type="ChEBI" id="CHEBI:30616"/>
    </ligand>
</feature>
<feature type="binding site" evidence="1">
    <location>
        <position position="387"/>
    </location>
    <ligand>
        <name>ATP</name>
        <dbReference type="ChEBI" id="CHEBI:30616"/>
    </ligand>
</feature>
<feature type="sequence conflict" description="In Ref. 1; AAH83324." evidence="4" ref="1">
    <original>R</original>
    <variation>C</variation>
    <location>
        <position position="289"/>
    </location>
</feature>
<feature type="sequence conflict" description="In Ref. 1; AAH83324." evidence="4" ref="1">
    <original>KLLAD</original>
    <variation>SAFSS</variation>
    <location>
        <begin position="300"/>
        <end position="304"/>
    </location>
</feature>
<reference key="1">
    <citation type="journal article" date="2004" name="Genome Res.">
        <title>The status, quality, and expansion of the NIH full-length cDNA project: the Mammalian Gene Collection (MGC).</title>
        <authorList>
            <consortium name="The MGC Project Team"/>
        </authorList>
    </citation>
    <scope>NUCLEOTIDE SEQUENCE [LARGE SCALE MRNA]</scope>
    <source>
        <strain>C57BL/6J</strain>
        <strain>FVB/N</strain>
        <tissue>Brain</tissue>
        <tissue>Kidney</tissue>
        <tissue>Mammary tumor</tissue>
    </source>
</reference>
<reference key="2">
    <citation type="journal article" date="2010" name="Cell">
        <title>A tissue-specific atlas of mouse protein phosphorylation and expression.</title>
        <authorList>
            <person name="Huttlin E.L."/>
            <person name="Jedrychowski M.P."/>
            <person name="Elias J.E."/>
            <person name="Goswami T."/>
            <person name="Rad R."/>
            <person name="Beausoleil S.A."/>
            <person name="Villen J."/>
            <person name="Haas W."/>
            <person name="Sowa M.E."/>
            <person name="Gygi S.P."/>
        </authorList>
    </citation>
    <scope>IDENTIFICATION BY MASS SPECTROMETRY [LARGE SCALE ANALYSIS]</scope>
    <source>
        <tissue>Brown adipose tissue</tissue>
        <tissue>Kidney</tissue>
        <tissue>Spleen</tissue>
    </source>
</reference>
<protein>
    <recommendedName>
        <fullName evidence="4">Atypical kinase COQ8B, mitochondrial</fullName>
        <ecNumber evidence="1">2.7.-.-</ecNumber>
    </recommendedName>
    <alternativeName>
        <fullName evidence="5">AarF domain-containing protein kinase 4</fullName>
    </alternativeName>
    <alternativeName>
        <fullName evidence="2">Coenzyme Q protein 8B</fullName>
    </alternativeName>
</protein>
<accession>Q566J8</accession>
<accession>Q5XJH7</accession>
<accession>Q91WT5</accession>
<name>COQ8B_MOUSE</name>
<dbReference type="EC" id="2.7.-.-" evidence="1"/>
<dbReference type="EMBL" id="BC013485">
    <property type="protein sequence ID" value="AAH13485.1"/>
    <property type="status" value="ALT_INIT"/>
    <property type="molecule type" value="mRNA"/>
</dbReference>
<dbReference type="EMBL" id="BC083324">
    <property type="protein sequence ID" value="AAH83324.1"/>
    <property type="molecule type" value="mRNA"/>
</dbReference>
<dbReference type="EMBL" id="BC093498">
    <property type="protein sequence ID" value="AAH93498.1"/>
    <property type="molecule type" value="mRNA"/>
</dbReference>
<dbReference type="CCDS" id="CCDS39847.1"/>
<dbReference type="SMR" id="Q566J8"/>
<dbReference type="FunCoup" id="Q566J8">
    <property type="interactions" value="1259"/>
</dbReference>
<dbReference type="STRING" id="10090.ENSMUSP00000104015"/>
<dbReference type="PhosphoSitePlus" id="Q566J8"/>
<dbReference type="PaxDb" id="10090-ENSMUSP00000003860"/>
<dbReference type="ProteomicsDB" id="283496"/>
<dbReference type="Pumba" id="Q566J8"/>
<dbReference type="AGR" id="MGI:1924139"/>
<dbReference type="MGI" id="MGI:1924139">
    <property type="gene designation" value="Coq8b"/>
</dbReference>
<dbReference type="eggNOG" id="KOG1234">
    <property type="taxonomic scope" value="Eukaryota"/>
</dbReference>
<dbReference type="InParanoid" id="Q566J8"/>
<dbReference type="PhylomeDB" id="Q566J8"/>
<dbReference type="Reactome" id="R-MMU-2142789">
    <property type="pathway name" value="Ubiquinol biosynthesis"/>
</dbReference>
<dbReference type="UniPathway" id="UPA00232"/>
<dbReference type="PRO" id="PR:Q566J8"/>
<dbReference type="Proteomes" id="UP000000589">
    <property type="component" value="Unplaced"/>
</dbReference>
<dbReference type="RNAct" id="Q566J8">
    <property type="molecule type" value="protein"/>
</dbReference>
<dbReference type="GO" id="GO:0005829">
    <property type="term" value="C:cytosol"/>
    <property type="evidence" value="ECO:0007669"/>
    <property type="project" value="UniProtKB-SubCell"/>
</dbReference>
<dbReference type="GO" id="GO:0031966">
    <property type="term" value="C:mitochondrial membrane"/>
    <property type="evidence" value="ECO:0007669"/>
    <property type="project" value="UniProtKB-SubCell"/>
</dbReference>
<dbReference type="GO" id="GO:0005739">
    <property type="term" value="C:mitochondrion"/>
    <property type="evidence" value="ECO:0007005"/>
    <property type="project" value="MGI"/>
</dbReference>
<dbReference type="GO" id="GO:0005886">
    <property type="term" value="C:plasma membrane"/>
    <property type="evidence" value="ECO:0007669"/>
    <property type="project" value="UniProtKB-SubCell"/>
</dbReference>
<dbReference type="GO" id="GO:0005524">
    <property type="term" value="F:ATP binding"/>
    <property type="evidence" value="ECO:0007669"/>
    <property type="project" value="UniProtKB-KW"/>
</dbReference>
<dbReference type="GO" id="GO:0004672">
    <property type="term" value="F:protein kinase activity"/>
    <property type="evidence" value="ECO:0000250"/>
    <property type="project" value="UniProtKB"/>
</dbReference>
<dbReference type="GO" id="GO:0021692">
    <property type="term" value="P:cerebellar Purkinje cell layer morphogenesis"/>
    <property type="evidence" value="ECO:0000250"/>
    <property type="project" value="UniProtKB"/>
</dbReference>
<dbReference type="GO" id="GO:0006744">
    <property type="term" value="P:ubiquinone biosynthetic process"/>
    <property type="evidence" value="ECO:0000250"/>
    <property type="project" value="UniProtKB"/>
</dbReference>
<dbReference type="CDD" id="cd13970">
    <property type="entry name" value="ABC1_ADCK3"/>
    <property type="match status" value="1"/>
</dbReference>
<dbReference type="InterPro" id="IPR004147">
    <property type="entry name" value="ABC1_dom"/>
</dbReference>
<dbReference type="InterPro" id="IPR034646">
    <property type="entry name" value="ADCK3_dom"/>
</dbReference>
<dbReference type="InterPro" id="IPR051409">
    <property type="entry name" value="Atypical_kinase_ADCK"/>
</dbReference>
<dbReference type="InterPro" id="IPR011009">
    <property type="entry name" value="Kinase-like_dom_sf"/>
</dbReference>
<dbReference type="PANTHER" id="PTHR43851">
    <property type="match status" value="1"/>
</dbReference>
<dbReference type="PANTHER" id="PTHR43851:SF4">
    <property type="entry name" value="ATYPICAL KINASE COQ8B, MITOCHONDRIAL"/>
    <property type="match status" value="1"/>
</dbReference>
<dbReference type="Pfam" id="PF03109">
    <property type="entry name" value="ABC1"/>
    <property type="match status" value="1"/>
</dbReference>
<dbReference type="SUPFAM" id="SSF56112">
    <property type="entry name" value="Protein kinase-like (PK-like)"/>
    <property type="match status" value="1"/>
</dbReference>
<sequence>MWLELGAMLRRTCGPLGRAVRLPCGGALGPRPHWWGPCRSCLAQSVHQDQPGRGLSEDDIRRAREARLRKAPRPQLSDRSRERKVPASRISRLASFGGLAVGLGLGALAEVTKKSLPGGSLQHEGVSGLGSSPFLSEANAERIVQTLCTVRGAALKIGQMLSIQDNSFISPQLQRIFERVRQSADFMPRWQMMRVLEEELGKDWQDKVASLEEVPFAAASIGQVHQGLLKDGTEVAVKIQYPGVAQSIQSDVENLLALLKMSVGLPEGLFAEQSLQTLQQELAWECDYRREAACAQTFRKLLADDPFFRVPAVVQELCTTRVLGMELAGGIPLDQCQGLSQDIRNQICFQLLRLCLRELFEFRFMQTDPNWANFLYDASSHQVTLLDFGASRAFGTEFTDHYIEVVKAAADGDRDRVLQKSQDLKFLTGFETKAFSDAHVEAVMILGEPFAASGPYDFGAGETARRIQGLIPVLLRHRLRPPPEETYALHRKLAGAFLACARLHAHIACRDLFQDTYHRYWASRQTLPLPAAS</sequence>
<comment type="function">
    <text evidence="1 2">Atypical kinase involved in the biosynthesis of coenzyme Q, also named ubiquinone, an essential lipid-soluble electron transporter for aerobic cellular respiration. Its substrate specificity is still unclear: may act as a protein kinase that mediates phosphorylation of COQ3 (By similarity). According to other reports, acts as a small molecule kinase, possibly a lipid kinase that phosphorylates a prenyl lipid in the ubiquinone biosynthesis pathway, as suggested by its ability to bind coenzyme Q lipid intermediates (By similarity). However, the small molecule kinase activity was not confirmed by another publication. Required for podocyte migration (By similarity).</text>
</comment>
<comment type="pathway">
    <text evidence="2">Cofactor biosynthesis; ubiquinone biosynthesis.</text>
</comment>
<comment type="subunit">
    <text evidence="2">Homodimer; homodimerizes via its transmembrane region. Interacts with COQ6 and COQ7. Interacts with the multi-subunit COQ enzyme complex, composed of at least COQ3, COQ4, COQ5, COQ6, COQ7 and COQ9.</text>
</comment>
<comment type="subcellular location">
    <subcellularLocation>
        <location evidence="2">Mitochondrion membrane</location>
        <topology evidence="2">Single-pass membrane protein</topology>
    </subcellularLocation>
    <subcellularLocation>
        <location evidence="2">Cytoplasm</location>
        <location evidence="2">Cytosol</location>
    </subcellularLocation>
    <subcellularLocation>
        <location evidence="2">Cell membrane</location>
    </subcellularLocation>
</comment>
<comment type="domain">
    <text evidence="1">Adopts an atypical protein kinase-like fold: while it adopts a core fold similar to that of well-characterized protein kinase-like domains. The KxGQ motif completely occludes the typical substrate binding pocket. Nucleotide-binding opens the substrate binding pocket and flips the active site from inside the hydrophobic core into a catalytically competent, solvent-exposed posture.</text>
</comment>
<comment type="similarity">
    <text evidence="4">Belongs to the protein kinase superfamily. ADCK protein kinase family.</text>
</comment>
<comment type="sequence caution" evidence="4">
    <conflict type="erroneous initiation">
        <sequence resource="EMBL-CDS" id="AAH13485"/>
    </conflict>
</comment>
<evidence type="ECO:0000250" key="1">
    <source>
        <dbReference type="UniProtKB" id="Q8NI60"/>
    </source>
</evidence>
<evidence type="ECO:0000250" key="2">
    <source>
        <dbReference type="UniProtKB" id="Q96D53"/>
    </source>
</evidence>
<evidence type="ECO:0000255" key="3"/>
<evidence type="ECO:0000305" key="4"/>
<evidence type="ECO:0000312" key="5">
    <source>
        <dbReference type="MGI" id="MGI:1924139"/>
    </source>
</evidence>
<keyword id="KW-0067">ATP-binding</keyword>
<keyword id="KW-1003">Cell membrane</keyword>
<keyword id="KW-0963">Cytoplasm</keyword>
<keyword id="KW-0418">Kinase</keyword>
<keyword id="KW-0472">Membrane</keyword>
<keyword id="KW-0496">Mitochondrion</keyword>
<keyword id="KW-0547">Nucleotide-binding</keyword>
<keyword id="KW-1185">Reference proteome</keyword>
<keyword id="KW-0808">Transferase</keyword>
<keyword id="KW-0812">Transmembrane</keyword>
<keyword id="KW-1133">Transmembrane helix</keyword>
<organism>
    <name type="scientific">Mus musculus</name>
    <name type="common">Mouse</name>
    <dbReference type="NCBI Taxonomy" id="10090"/>
    <lineage>
        <taxon>Eukaryota</taxon>
        <taxon>Metazoa</taxon>
        <taxon>Chordata</taxon>
        <taxon>Craniata</taxon>
        <taxon>Vertebrata</taxon>
        <taxon>Euteleostomi</taxon>
        <taxon>Mammalia</taxon>
        <taxon>Eutheria</taxon>
        <taxon>Euarchontoglires</taxon>
        <taxon>Glires</taxon>
        <taxon>Rodentia</taxon>
        <taxon>Myomorpha</taxon>
        <taxon>Muroidea</taxon>
        <taxon>Muridae</taxon>
        <taxon>Murinae</taxon>
        <taxon>Mus</taxon>
        <taxon>Mus</taxon>
    </lineage>
</organism>
<gene>
    <name evidence="2" type="primary">Coq8b</name>
    <name evidence="5" type="synonym">Adck4</name>
</gene>
<proteinExistence type="evidence at protein level"/>